<reference key="1">
    <citation type="journal article" date="2006" name="Nat. Biotechnol.">
        <title>Genome sequence of the bioplastic-producing 'Knallgas' bacterium Ralstonia eutropha H16.</title>
        <authorList>
            <person name="Pohlmann A."/>
            <person name="Fricke W.F."/>
            <person name="Reinecke F."/>
            <person name="Kusian B."/>
            <person name="Liesegang H."/>
            <person name="Cramm R."/>
            <person name="Eitinger T."/>
            <person name="Ewering C."/>
            <person name="Poetter M."/>
            <person name="Schwartz E."/>
            <person name="Strittmatter A."/>
            <person name="Voss I."/>
            <person name="Gottschalk G."/>
            <person name="Steinbuechel A."/>
            <person name="Friedrich B."/>
            <person name="Bowien B."/>
        </authorList>
    </citation>
    <scope>NUCLEOTIDE SEQUENCE [LARGE SCALE GENOMIC DNA]</scope>
    <source>
        <strain>ATCC 17699 / DSM 428 / KCTC 22496 / NCIMB 10442 / H16 / Stanier 337</strain>
    </source>
</reference>
<dbReference type="EC" id="6.1.1.6" evidence="1"/>
<dbReference type="EMBL" id="AM260479">
    <property type="protein sequence ID" value="CAJ92308.1"/>
    <property type="molecule type" value="Genomic_DNA"/>
</dbReference>
<dbReference type="RefSeq" id="WP_011614912.1">
    <property type="nucleotide sequence ID" value="NC_008313.1"/>
</dbReference>
<dbReference type="SMR" id="Q0KCG3"/>
<dbReference type="STRING" id="381666.H16_A1167"/>
<dbReference type="KEGG" id="reh:H16_A1167"/>
<dbReference type="PATRIC" id="fig|381666.6.peg.1553"/>
<dbReference type="eggNOG" id="COG1190">
    <property type="taxonomic scope" value="Bacteria"/>
</dbReference>
<dbReference type="HOGENOM" id="CLU_008255_6_0_4"/>
<dbReference type="OrthoDB" id="9801152at2"/>
<dbReference type="Proteomes" id="UP000008210">
    <property type="component" value="Chromosome 1"/>
</dbReference>
<dbReference type="GO" id="GO:0005829">
    <property type="term" value="C:cytosol"/>
    <property type="evidence" value="ECO:0007669"/>
    <property type="project" value="TreeGrafter"/>
</dbReference>
<dbReference type="GO" id="GO:0005524">
    <property type="term" value="F:ATP binding"/>
    <property type="evidence" value="ECO:0007669"/>
    <property type="project" value="UniProtKB-UniRule"/>
</dbReference>
<dbReference type="GO" id="GO:0004824">
    <property type="term" value="F:lysine-tRNA ligase activity"/>
    <property type="evidence" value="ECO:0007669"/>
    <property type="project" value="UniProtKB-UniRule"/>
</dbReference>
<dbReference type="GO" id="GO:0000287">
    <property type="term" value="F:magnesium ion binding"/>
    <property type="evidence" value="ECO:0007669"/>
    <property type="project" value="UniProtKB-UniRule"/>
</dbReference>
<dbReference type="GO" id="GO:0000049">
    <property type="term" value="F:tRNA binding"/>
    <property type="evidence" value="ECO:0007669"/>
    <property type="project" value="TreeGrafter"/>
</dbReference>
<dbReference type="GO" id="GO:0006430">
    <property type="term" value="P:lysyl-tRNA aminoacylation"/>
    <property type="evidence" value="ECO:0007669"/>
    <property type="project" value="UniProtKB-UniRule"/>
</dbReference>
<dbReference type="CDD" id="cd00775">
    <property type="entry name" value="LysRS_core"/>
    <property type="match status" value="1"/>
</dbReference>
<dbReference type="CDD" id="cd04322">
    <property type="entry name" value="LysRS_N"/>
    <property type="match status" value="1"/>
</dbReference>
<dbReference type="FunFam" id="2.40.50.140:FF:000024">
    <property type="entry name" value="Lysine--tRNA ligase"/>
    <property type="match status" value="1"/>
</dbReference>
<dbReference type="FunFam" id="3.30.930.10:FF:000001">
    <property type="entry name" value="Lysine--tRNA ligase"/>
    <property type="match status" value="1"/>
</dbReference>
<dbReference type="Gene3D" id="3.30.930.10">
    <property type="entry name" value="Bira Bifunctional Protein, Domain 2"/>
    <property type="match status" value="1"/>
</dbReference>
<dbReference type="Gene3D" id="2.40.50.140">
    <property type="entry name" value="Nucleic acid-binding proteins"/>
    <property type="match status" value="1"/>
</dbReference>
<dbReference type="HAMAP" id="MF_00252">
    <property type="entry name" value="Lys_tRNA_synth_class2"/>
    <property type="match status" value="1"/>
</dbReference>
<dbReference type="InterPro" id="IPR004364">
    <property type="entry name" value="Aa-tRNA-synt_II"/>
</dbReference>
<dbReference type="InterPro" id="IPR006195">
    <property type="entry name" value="aa-tRNA-synth_II"/>
</dbReference>
<dbReference type="InterPro" id="IPR045864">
    <property type="entry name" value="aa-tRNA-synth_II/BPL/LPL"/>
</dbReference>
<dbReference type="InterPro" id="IPR002313">
    <property type="entry name" value="Lys-tRNA-ligase_II"/>
</dbReference>
<dbReference type="InterPro" id="IPR044136">
    <property type="entry name" value="Lys-tRNA-ligase_II_N"/>
</dbReference>
<dbReference type="InterPro" id="IPR018149">
    <property type="entry name" value="Lys-tRNA-synth_II_C"/>
</dbReference>
<dbReference type="InterPro" id="IPR012340">
    <property type="entry name" value="NA-bd_OB-fold"/>
</dbReference>
<dbReference type="InterPro" id="IPR004365">
    <property type="entry name" value="NA-bd_OB_tRNA"/>
</dbReference>
<dbReference type="NCBIfam" id="TIGR00499">
    <property type="entry name" value="lysS_bact"/>
    <property type="match status" value="1"/>
</dbReference>
<dbReference type="NCBIfam" id="NF001756">
    <property type="entry name" value="PRK00484.1"/>
    <property type="match status" value="1"/>
</dbReference>
<dbReference type="PANTHER" id="PTHR42918:SF15">
    <property type="entry name" value="LYSINE--TRNA LIGASE, CHLOROPLASTIC_MITOCHONDRIAL"/>
    <property type="match status" value="1"/>
</dbReference>
<dbReference type="PANTHER" id="PTHR42918">
    <property type="entry name" value="LYSYL-TRNA SYNTHETASE"/>
    <property type="match status" value="1"/>
</dbReference>
<dbReference type="Pfam" id="PF00152">
    <property type="entry name" value="tRNA-synt_2"/>
    <property type="match status" value="1"/>
</dbReference>
<dbReference type="Pfam" id="PF01336">
    <property type="entry name" value="tRNA_anti-codon"/>
    <property type="match status" value="1"/>
</dbReference>
<dbReference type="PRINTS" id="PR00982">
    <property type="entry name" value="TRNASYNTHLYS"/>
</dbReference>
<dbReference type="SUPFAM" id="SSF55681">
    <property type="entry name" value="Class II aaRS and biotin synthetases"/>
    <property type="match status" value="1"/>
</dbReference>
<dbReference type="SUPFAM" id="SSF50249">
    <property type="entry name" value="Nucleic acid-binding proteins"/>
    <property type="match status" value="1"/>
</dbReference>
<dbReference type="PROSITE" id="PS50862">
    <property type="entry name" value="AA_TRNA_LIGASE_II"/>
    <property type="match status" value="1"/>
</dbReference>
<proteinExistence type="inferred from homology"/>
<organism>
    <name type="scientific">Cupriavidus necator (strain ATCC 17699 / DSM 428 / KCTC 22496 / NCIMB 10442 / H16 / Stanier 337)</name>
    <name type="common">Ralstonia eutropha</name>
    <dbReference type="NCBI Taxonomy" id="381666"/>
    <lineage>
        <taxon>Bacteria</taxon>
        <taxon>Pseudomonadati</taxon>
        <taxon>Pseudomonadota</taxon>
        <taxon>Betaproteobacteria</taxon>
        <taxon>Burkholderiales</taxon>
        <taxon>Burkholderiaceae</taxon>
        <taxon>Cupriavidus</taxon>
    </lineage>
</organism>
<accession>Q0KCG3</accession>
<sequence>MTEPNRAQAKPAAADTPAVDENKIIAERREKLAALRQQGVPFPNDFRPTHQAAALQAQYTETEQATLEAAPVEVAIAGRMMLKRVMGKASFATVQDGSGQIQFYITRDKVGEEVYAAFKHWDLGDIISARGELFRTNKGELSVQVRELRLLSKSLRPLPDKFHGLADQEMKYRQRYVDLIVSPETRNTFRARTNAISSLRRHMADAGFMEVETPMLHPIPGGAAAKPFITHHNALDMQMFMRIAPELYLKRLIVGGFERVFEINRNFRNEGVSPRHNPEFTMMEFYAAYTDYRWLMDFTEDLIRKAAIDARGSAVLTYQDRELDLSKPFHRLTICQAIQKFAPQYTDAQLADAGFLRTELKKFGVNTNAPQFLNAGLGTLQLVLFEETAENQLWEPTFIVDYPVEVSPLARASDTVPGITERFELFITGREIANGFSELNDAEDQADRFRKQVEQKDAGDEEAMYFDADYIRALEYGMPPTGGCGIGIDRLVMLLTDSPNIRDVILFPHLRRED</sequence>
<protein>
    <recommendedName>
        <fullName evidence="1">Lysine--tRNA ligase</fullName>
        <ecNumber evidence="1">6.1.1.6</ecNumber>
    </recommendedName>
    <alternativeName>
        <fullName evidence="1">Lysyl-tRNA synthetase</fullName>
        <shortName evidence="1">LysRS</shortName>
    </alternativeName>
</protein>
<feature type="chain" id="PRO_1000012917" description="Lysine--tRNA ligase">
    <location>
        <begin position="1"/>
        <end position="514"/>
    </location>
</feature>
<feature type="binding site" evidence="1">
    <location>
        <position position="424"/>
    </location>
    <ligand>
        <name>Mg(2+)</name>
        <dbReference type="ChEBI" id="CHEBI:18420"/>
        <label>1</label>
    </ligand>
</feature>
<feature type="binding site" evidence="1">
    <location>
        <position position="431"/>
    </location>
    <ligand>
        <name>Mg(2+)</name>
        <dbReference type="ChEBI" id="CHEBI:18420"/>
        <label>1</label>
    </ligand>
</feature>
<feature type="binding site" evidence="1">
    <location>
        <position position="431"/>
    </location>
    <ligand>
        <name>Mg(2+)</name>
        <dbReference type="ChEBI" id="CHEBI:18420"/>
        <label>2</label>
    </ligand>
</feature>
<comment type="catalytic activity">
    <reaction evidence="1">
        <text>tRNA(Lys) + L-lysine + ATP = L-lysyl-tRNA(Lys) + AMP + diphosphate</text>
        <dbReference type="Rhea" id="RHEA:20792"/>
        <dbReference type="Rhea" id="RHEA-COMP:9696"/>
        <dbReference type="Rhea" id="RHEA-COMP:9697"/>
        <dbReference type="ChEBI" id="CHEBI:30616"/>
        <dbReference type="ChEBI" id="CHEBI:32551"/>
        <dbReference type="ChEBI" id="CHEBI:33019"/>
        <dbReference type="ChEBI" id="CHEBI:78442"/>
        <dbReference type="ChEBI" id="CHEBI:78529"/>
        <dbReference type="ChEBI" id="CHEBI:456215"/>
        <dbReference type="EC" id="6.1.1.6"/>
    </reaction>
</comment>
<comment type="cofactor">
    <cofactor evidence="1">
        <name>Mg(2+)</name>
        <dbReference type="ChEBI" id="CHEBI:18420"/>
    </cofactor>
    <text evidence="1">Binds 3 Mg(2+) ions per subunit.</text>
</comment>
<comment type="subunit">
    <text evidence="1">Homodimer.</text>
</comment>
<comment type="subcellular location">
    <subcellularLocation>
        <location evidence="1">Cytoplasm</location>
    </subcellularLocation>
</comment>
<comment type="similarity">
    <text evidence="1">Belongs to the class-II aminoacyl-tRNA synthetase family.</text>
</comment>
<name>SYK_CUPNH</name>
<gene>
    <name evidence="1" type="primary">lysS</name>
    <name type="ordered locus">H16_A1167</name>
</gene>
<keyword id="KW-0030">Aminoacyl-tRNA synthetase</keyword>
<keyword id="KW-0067">ATP-binding</keyword>
<keyword id="KW-0963">Cytoplasm</keyword>
<keyword id="KW-0436">Ligase</keyword>
<keyword id="KW-0460">Magnesium</keyword>
<keyword id="KW-0479">Metal-binding</keyword>
<keyword id="KW-0547">Nucleotide-binding</keyword>
<keyword id="KW-0648">Protein biosynthesis</keyword>
<keyword id="KW-1185">Reference proteome</keyword>
<evidence type="ECO:0000255" key="1">
    <source>
        <dbReference type="HAMAP-Rule" id="MF_00252"/>
    </source>
</evidence>